<keyword id="KW-0007">Acetylation</keyword>
<keyword id="KW-0106">Calcium</keyword>
<keyword id="KW-0966">Cell projection</keyword>
<keyword id="KW-0378">Hydrolase</keyword>
<keyword id="KW-0442">Lipid degradation</keyword>
<keyword id="KW-0443">Lipid metabolism</keyword>
<keyword id="KW-0479">Metal-binding</keyword>
<keyword id="KW-0597">Phosphoprotein</keyword>
<keyword id="KW-1185">Reference proteome</keyword>
<keyword id="KW-0677">Repeat</keyword>
<keyword id="KW-0727">SH2 domain</keyword>
<keyword id="KW-0728">SH3 domain</keyword>
<keyword id="KW-0807">Transducer</keyword>
<keyword id="KW-0832">Ubl conjugation</keyword>
<comment type="function">
    <text evidence="2 3 16">Mediates the production of the second messenger molecules diacylglycerol (DAG) and inositol 1,4,5-trisphosphate (IP3). Plays an important role in the regulation of intracellular signaling cascades. Becomes activated in response to ligand-mediated activation of receptor-type tyrosine kinases, such as PDGFRA, PDGFRB, EGFR, FGFR1, FGFR2, FGFR3 and FGFR4 (By similarity). Plays a role in actin reorganization and cell migration (By similarity). Guanine nucleotide exchange factor that binds the GTPase DNM1 and catalyzes the dissociation of GDP, allowing a GTP molecule to bind in its place, therefore enhancing DNM1-dependent endocytosis (By similarity).</text>
</comment>
<comment type="catalytic activity">
    <reaction evidence="2">
        <text>a 1,2-diacyl-sn-glycero-3-phospho-(1D-myo-inositol-4,5-bisphosphate) + H2O = 1D-myo-inositol 1,4,5-trisphosphate + a 1,2-diacyl-sn-glycerol + H(+)</text>
        <dbReference type="Rhea" id="RHEA:33179"/>
        <dbReference type="ChEBI" id="CHEBI:15377"/>
        <dbReference type="ChEBI" id="CHEBI:15378"/>
        <dbReference type="ChEBI" id="CHEBI:17815"/>
        <dbReference type="ChEBI" id="CHEBI:58456"/>
        <dbReference type="ChEBI" id="CHEBI:203600"/>
        <dbReference type="EC" id="3.1.4.11"/>
    </reaction>
    <physiologicalReaction direction="left-to-right" evidence="2">
        <dbReference type="Rhea" id="RHEA:33180"/>
    </physiologicalReaction>
</comment>
<comment type="catalytic activity">
    <reaction evidence="2">
        <text>a 1,2-diacyl-sn-glycero-3-phospho-(1D-myo-inositol) + H2O = 1D-myo-inositol 1-phosphate + a 1,2-diacyl-sn-glycerol + H(+)</text>
        <dbReference type="Rhea" id="RHEA:43484"/>
        <dbReference type="ChEBI" id="CHEBI:15377"/>
        <dbReference type="ChEBI" id="CHEBI:15378"/>
        <dbReference type="ChEBI" id="CHEBI:17815"/>
        <dbReference type="ChEBI" id="CHEBI:57880"/>
        <dbReference type="ChEBI" id="CHEBI:58433"/>
    </reaction>
    <physiologicalReaction direction="left-to-right" evidence="2">
        <dbReference type="Rhea" id="RHEA:43485"/>
    </physiologicalReaction>
</comment>
<comment type="cofactor">
    <cofactor evidence="2">
        <name>Ca(2+)</name>
        <dbReference type="ChEBI" id="CHEBI:29108"/>
    </cofactor>
</comment>
<comment type="activity regulation">
    <text evidence="3">Activated by phosphorylation on tyrosine residues.</text>
</comment>
<comment type="subunit">
    <text evidence="2 3 12 13 14 15 17 18 19 20 21 22 23 24 25 26">Interacts (via SH2 domain) with FGFR1, FGFR2, FGFR3 and FGFR4 (phosphorylated). Interacts with RALGPS1. Interacts (via SH2 domains) with VIL1 (phosphorylated at C-terminus tyrosine phosphorylation sites). Interacts (via SH2 domain) with RET (By similarity). Interacts with AGAP2 via its SH3 domain. Interacts with LAT (phosphorylated) upon TCR activation. Interacts (via SH3 domain) with the Pro-rich domain of TNK1. Associates with BLNK, VAV1, GRB2 and NCK1 in a B-cell antigen receptor-dependent fashion. Interacts with CBLB in activated T-cells; which inhibits phosphorylation. Interacts with SHB. Interacts (via SH3 domain) with the Arg/Gly-rich-flanked Pro-rich domains of KHDRBS1/SAM68. This interaction is selectively regulated by arginine methylation of KHDRBS1/SAM68. Interacts with INPP5D/SHIP1, THEMIS and CLNK. Interacts with FLT4 and KIT. Interacts with AXL (By similarity). Interacts with SYK; activates PLCG1 (By similarity). Interacts with FLT1 (tyrosine-phosphorylated). Interacts (via SH2 domain) with PDGFRA and PDGFRB (tyrosine phosphorylated). Interacts with PIP5K1C. Interacts with NTRK1 and NTRK2 (phosphorylated upon ligand-binding). Interacts with TESPA1 (By similarity). Interacts with GRB2, LAT and THEMIS upon TCR activation in thymocytes; the association is weaker in the absence of TESPA1. Interacts (via C-terminal proline-rich domain (PRD)) with PLCG1 (via SH3 domain); this interaction leads to guanine nucleotide exchange from PlCG1 to DNM1 and enhances DNM1-dependent endocytosis (By similarity).</text>
</comment>
<comment type="interaction">
    <interactant intactId="EBI-300133">
        <id>Q62077</id>
    </interactant>
    <interactant intactId="EBI-617901">
        <id>P14753</id>
        <label>Epor</label>
    </interactant>
    <organismsDiffer>false</organismsDiffer>
    <experiments>4</experiments>
</comment>
<comment type="interaction">
    <interactant intactId="EBI-300133">
        <id>Q62077</id>
    </interactant>
    <interactant intactId="EBI-1688">
        <id>Q60631</id>
        <label>Grb2</label>
    </interactant>
    <organismsDiffer>false</organismsDiffer>
    <experiments>2</experiments>
</comment>
<comment type="interaction">
    <interactant intactId="EBI-300133">
        <id>Q62077</id>
    </interactant>
    <interactant intactId="EBI-6390034">
        <id>O54957</id>
        <label>Lat</label>
    </interactant>
    <organismsDiffer>false</organismsDiffer>
    <experiments>5</experiments>
</comment>
<comment type="interaction">
    <interactant intactId="EBI-300133">
        <id>Q62077</id>
    </interactant>
    <interactant intactId="EBI-2257257">
        <id>P48356</id>
        <label>Lepr</label>
    </interactant>
    <organismsDiffer>false</organismsDiffer>
    <experiments>2</experiments>
</comment>
<comment type="subcellular location">
    <subcellularLocation>
        <location evidence="3">Cell projection</location>
        <location evidence="3">Lamellipodium</location>
    </subcellularLocation>
    <subcellularLocation>
        <location evidence="3">Cell projection</location>
        <location evidence="3">Ruffle</location>
    </subcellularLocation>
    <text evidence="3">Rapidly redistributed to ruffles and lamellipodia structures in response to epidermal growth factor (EGF) treatment.</text>
</comment>
<comment type="domain">
    <text evidence="3 14">The SH3 domain mediates interaction with RALGPS1 (By similarity). The SH3 domain also mediates interaction with CLNK.</text>
</comment>
<comment type="PTM">
    <text evidence="3">Tyrosine phosphorylated in response to signaling via activated FLT3, KIT and PDGFRA (By similarity). Tyrosine phosphorylated by activated FGFR1, FGFR2, FGFR3 and FGFR4. Tyrosine phosphorylated by activated FLT1 and KDR. Tyrosine phosphorylated by activated PDGFRB. The receptor-mediated activation of PLCG1 involves its phosphorylation by tyrosine kinases in response to ligation of a variety of growth factor receptors and immune system receptors. For instance, SYK phosphorylates and activates PLCG1 in response to ligation of the B-cell receptor. Phosphorylated by ITK and TXK on Tyr-783 upon TCR activation in T-cells. May be dephosphorylated by PTPRJ (By similarity).</text>
</comment>
<comment type="PTM">
    <text evidence="16">Ubiquitinated by CBLB in activated T-cells.</text>
</comment>
<gene>
    <name evidence="28" type="primary">Plcg1</name>
    <name type="synonym">Plcg-1</name>
</gene>
<evidence type="ECO:0000250" key="1">
    <source>
        <dbReference type="UniProtKB" id="P08487"/>
    </source>
</evidence>
<evidence type="ECO:0000250" key="2">
    <source>
        <dbReference type="UniProtKB" id="P10686"/>
    </source>
</evidence>
<evidence type="ECO:0000250" key="3">
    <source>
        <dbReference type="UniProtKB" id="P19174"/>
    </source>
</evidence>
<evidence type="ECO:0000255" key="4">
    <source>
        <dbReference type="PROSITE-ProRule" id="PRU00041"/>
    </source>
</evidence>
<evidence type="ECO:0000255" key="5">
    <source>
        <dbReference type="PROSITE-ProRule" id="PRU00145"/>
    </source>
</evidence>
<evidence type="ECO:0000255" key="6">
    <source>
        <dbReference type="PROSITE-ProRule" id="PRU00191"/>
    </source>
</evidence>
<evidence type="ECO:0000255" key="7">
    <source>
        <dbReference type="PROSITE-ProRule" id="PRU00192"/>
    </source>
</evidence>
<evidence type="ECO:0000255" key="8">
    <source>
        <dbReference type="PROSITE-ProRule" id="PRU00270"/>
    </source>
</evidence>
<evidence type="ECO:0000255" key="9">
    <source>
        <dbReference type="PROSITE-ProRule" id="PRU00271"/>
    </source>
</evidence>
<evidence type="ECO:0000255" key="10">
    <source>
        <dbReference type="PROSITE-ProRule" id="PRU00448"/>
    </source>
</evidence>
<evidence type="ECO:0000256" key="11">
    <source>
        <dbReference type="SAM" id="MobiDB-lite"/>
    </source>
</evidence>
<evidence type="ECO:0000269" key="12">
    <source>
    </source>
</evidence>
<evidence type="ECO:0000269" key="13">
    <source>
    </source>
</evidence>
<evidence type="ECO:0000269" key="14">
    <source>
    </source>
</evidence>
<evidence type="ECO:0000269" key="15">
    <source>
    </source>
</evidence>
<evidence type="ECO:0000269" key="16">
    <source>
    </source>
</evidence>
<evidence type="ECO:0000269" key="17">
    <source>
    </source>
</evidence>
<evidence type="ECO:0000269" key="18">
    <source>
    </source>
</evidence>
<evidence type="ECO:0000269" key="19">
    <source>
    </source>
</evidence>
<evidence type="ECO:0000269" key="20">
    <source>
    </source>
</evidence>
<evidence type="ECO:0000269" key="21">
    <source>
    </source>
</evidence>
<evidence type="ECO:0000269" key="22">
    <source>
    </source>
</evidence>
<evidence type="ECO:0000269" key="23">
    <source>
    </source>
</evidence>
<evidence type="ECO:0000269" key="24">
    <source>
    </source>
</evidence>
<evidence type="ECO:0000269" key="25">
    <source>
    </source>
</evidence>
<evidence type="ECO:0000269" key="26">
    <source>
    </source>
</evidence>
<evidence type="ECO:0000305" key="27"/>
<evidence type="ECO:0000312" key="28">
    <source>
        <dbReference type="MGI" id="MGI:97615"/>
    </source>
</evidence>
<evidence type="ECO:0007744" key="29">
    <source>
    </source>
</evidence>
<evidence type="ECO:0007744" key="30">
    <source>
    </source>
</evidence>
<evidence type="ECO:0007744" key="31">
    <source>
    </source>
</evidence>
<reference key="1">
    <citation type="journal article" date="2004" name="Genome Res.">
        <title>The status, quality, and expansion of the NIH full-length cDNA project: the Mammalian Gene Collection (MGC).</title>
        <authorList>
            <consortium name="The MGC Project Team"/>
        </authorList>
    </citation>
    <scope>NUCLEOTIDE SEQUENCE [LARGE SCALE MRNA]</scope>
    <source>
        <strain>C57BL/6J</strain>
        <tissue>Brain</tissue>
    </source>
</reference>
<reference key="2">
    <citation type="journal article" date="1996" name="Biochem. J.">
        <title>Phospholipase C in mouse oocytes: characterization of beta and gamma isoforms and their possible involvement in sperm-induced Ca2+ spiking.</title>
        <authorList>
            <person name="Dupont G."/>
            <person name="McGuinness O.M."/>
            <person name="Johnson M.H."/>
            <person name="Berridge M.J."/>
            <person name="Borgese F."/>
        </authorList>
    </citation>
    <scope>NUCLEOTIDE SEQUENCE [MRNA] OF 846-1052</scope>
    <source>
        <tissue>Oocyte</tissue>
    </source>
</reference>
<reference key="3">
    <citation type="journal article" date="1991" name="EMBO J.">
        <title>Signal transduction by normal isoforms and W mutant variants of the Kit receptor tyrosine kinase.</title>
        <authorList>
            <person name="Reith A.D."/>
            <person name="Ellis C."/>
            <person name="Lyman S.D."/>
            <person name="Anderson D.M."/>
            <person name="Williams D.E."/>
            <person name="Bernstein A."/>
            <person name="Pawson T."/>
        </authorList>
    </citation>
    <scope>INTERACTION WITH KIT</scope>
    <scope>PHOSPHORYLATION</scope>
</reference>
<reference key="4">
    <citation type="journal article" date="1991" name="Mol. Cell. Biol.">
        <title>Tyrosine mutations within the alpha platelet-derived growth factor receptor kinase insert domain abrogate receptor-associated phosphatidylinositol-3 kinase activity without affecting mitogenic or chemotactic signal transduction.</title>
        <authorList>
            <person name="Yu J.C."/>
            <person name="Heidaran M.A."/>
            <person name="Pierce J.H."/>
            <person name="Gutkind J.S."/>
            <person name="Lombardi D."/>
            <person name="Ruggiero M."/>
            <person name="Aaronson S.A."/>
        </authorList>
    </citation>
    <scope>INTERACTION WITH PDGFRA</scope>
    <scope>ACTIVATION BY PDGFRA</scope>
</reference>
<reference key="5">
    <citation type="journal article" date="1996" name="Mol. Cell. Biol.">
        <title>Phosphorylation of tyrosine 720 in the platelet-derived growth factor alpha receptor is required for binding of Grb2 and SHP-2 but not for activation of Ras or cell proliferation.</title>
        <authorList>
            <person name="Bazenet C.E."/>
            <person name="Gelderloos J.A."/>
            <person name="Kazlauskas A."/>
        </authorList>
    </citation>
    <scope>INTERACTION WITH PDGFRA</scope>
</reference>
<reference key="6">
    <citation type="journal article" date="1997" name="Biochem. Biophys. Res. Commun.">
        <title>The phosphorylated 1169-tyrosine containing region of flt-1 kinase (VEGFR-1) is a major binding site for PLCgamma.</title>
        <authorList>
            <person name="Sawano A."/>
            <person name="Takahashi T."/>
            <person name="Yamaguchi S."/>
            <person name="Shibuya M."/>
        </authorList>
    </citation>
    <scope>PHOSPHORYLATION</scope>
    <scope>INTERACTION WITH FLT1</scope>
</reference>
<reference key="7">
    <citation type="journal article" date="2000" name="J. Biol. Chem.">
        <title>Arginine methylation inhibits the binding of proline-rich ligands to Src homology 3, but not WW, domains.</title>
        <authorList>
            <person name="Bedford M.T."/>
            <person name="Frankel A."/>
            <person name="Yaffe M.B."/>
            <person name="Clarke S."/>
            <person name="Leder P."/>
            <person name="Richard S."/>
        </authorList>
    </citation>
    <scope>INTERACTION WITH KHDRBS1</scope>
</reference>
<reference key="8">
    <citation type="journal article" date="2000" name="Nature">
        <title>Negative regulation of lymphocyte activation and autoimmunity by the molecular adaptor Cbl-b.</title>
        <authorList>
            <person name="Bachmaier K."/>
            <person name="Krawczyk C."/>
            <person name="Kozieradzki I."/>
            <person name="Kong Y.-Y."/>
            <person name="Sasaki T."/>
            <person name="Oliveira-dos-Santos A."/>
            <person name="Mariathasan S."/>
            <person name="Bouchard D."/>
            <person name="Wakeham A."/>
            <person name="Itie A."/>
            <person name="Le J."/>
            <person name="Ohashi P.S."/>
            <person name="Sarosi I."/>
            <person name="Nishina H."/>
            <person name="Lipkowitz S."/>
            <person name="Penninger J.M."/>
        </authorList>
    </citation>
    <scope>INTERACTION WITH CBLB</scope>
</reference>
<reference key="9">
    <citation type="journal article" date="2001" name="J. Biol. Chem.">
        <title>MIST functions through distinct domains in immunoreceptor signaling in the presence and absence of LAT.</title>
        <authorList>
            <person name="Goitsuka R."/>
            <person name="Tatsuno A."/>
            <person name="Ishiai M."/>
            <person name="Kurosaki T."/>
            <person name="Kitamura D."/>
        </authorList>
    </citation>
    <scope>INTERACTION WITH CLNK</scope>
    <scope>DOMAIN</scope>
</reference>
<reference key="10">
    <citation type="journal article" date="2002" name="Neuron">
        <title>Mechanism of TrkB-mediated hippocampal long-term potentiation.</title>
        <authorList>
            <person name="Minichiello L."/>
            <person name="Calella A.M."/>
            <person name="Medina D.L."/>
            <person name="Bonhoeffer T."/>
            <person name="Klein R."/>
            <person name="Korte M."/>
        </authorList>
    </citation>
    <scope>INTERACTION WITH NTRK2</scope>
</reference>
<reference key="11">
    <citation type="journal article" date="2004" name="Immunity">
        <title>Essential role of the E3 ubiquitin ligase Cbl-b in T cell anergy induction.</title>
        <authorList>
            <person name="Jeon M.-S."/>
            <person name="Atfield A."/>
            <person name="Venuprasad K."/>
            <person name="Krawczyk C."/>
            <person name="Sarao R."/>
            <person name="Elly C."/>
            <person name="Yang C."/>
            <person name="Arya S."/>
            <person name="Bachmaier K."/>
            <person name="Su L."/>
            <person name="Bouchard D."/>
            <person name="Jones R."/>
            <person name="Gronski M."/>
            <person name="Ohashi P."/>
            <person name="Wada T."/>
            <person name="Bloom D."/>
            <person name="Fathman C.G."/>
            <person name="Liu Y.-C."/>
            <person name="Penninger J.M."/>
        </authorList>
    </citation>
    <scope>PHOSPHORYLATION</scope>
    <scope>UBIQUITINATION</scope>
    <scope>FUNCTION</scope>
</reference>
<reference key="12">
    <citation type="journal article" date="2005" name="Biochem. Biophys. Res. Commun.">
        <title>Tyrosine 769 of the keratinocyte growth factor receptor is required for receptor signaling but not endocytosis.</title>
        <authorList>
            <person name="Ceridono M."/>
            <person name="Belleudi F."/>
            <person name="Ceccarelli S."/>
            <person name="Torrisi M.R."/>
        </authorList>
    </citation>
    <scope>INTERACTION WITH FGFR2</scope>
    <scope>PHOSPHORYLATION</scope>
</reference>
<reference key="13">
    <citation type="journal article" date="2005" name="Exp. Mol. Med.">
        <title>Inositol 5'-phosphatase, SHIP1 interacts with phospholipase C-gamma1 and modulates EGF-induced PLC activity.</title>
        <authorList>
            <person name="Song M."/>
            <person name="Kim M.J."/>
            <person name="Ha S."/>
            <person name="Park J.B."/>
            <person name="Ryu S.H."/>
            <person name="Suh P.-G."/>
        </authorList>
    </citation>
    <scope>INTERACTION WITH INPP5D</scope>
</reference>
<reference key="14">
    <citation type="journal article" date="2005" name="Nat. Biotechnol.">
        <title>Immunoaffinity profiling of tyrosine phosphorylation in cancer cells.</title>
        <authorList>
            <person name="Rush J."/>
            <person name="Moritz A."/>
            <person name="Lee K.A."/>
            <person name="Guo A."/>
            <person name="Goss V.L."/>
            <person name="Spek E.J."/>
            <person name="Zhang H."/>
            <person name="Zha X.-M."/>
            <person name="Polakiewicz R.D."/>
            <person name="Comb M.J."/>
        </authorList>
    </citation>
    <scope>PHOSPHORYLATION [LARGE SCALE ANALYSIS] AT TYR-771</scope>
    <scope>IDENTIFICATION BY MASS SPECTROMETRY [LARGE SCALE ANALYSIS]</scope>
</reference>
<reference key="15">
    <citation type="journal article" date="2007" name="J. Biol. Chem.">
        <title>Binding of Cbl to a phospholipase Cgamma1-docking site on platelet-derived growth factor receptor beta provides a dual mechanism of negative regulation.</title>
        <authorList>
            <person name="Reddi A.L."/>
            <person name="Ying G."/>
            <person name="Duan L."/>
            <person name="Chen G."/>
            <person name="Dimri M."/>
            <person name="Douillard P."/>
            <person name="Druker B.J."/>
            <person name="Naramura M."/>
            <person name="Band V."/>
            <person name="Band H."/>
        </authorList>
    </citation>
    <scope>INTERACTION WITH PDGFRB</scope>
</reference>
<reference key="16">
    <citation type="journal article" date="2007" name="J. Cell Biol.">
        <title>Type I gamma phosphatidylinositol phosphate kinase is required for EGF-stimulated directional cell migration.</title>
        <authorList>
            <person name="Sun Y."/>
            <person name="Ling K."/>
            <person name="Wagoner M.P."/>
            <person name="Anderson R.A."/>
        </authorList>
    </citation>
    <scope>INTERACTION WITH PIP5K1C</scope>
</reference>
<reference key="17">
    <citation type="journal article" date="2007" name="J. Immunol.">
        <title>Quantitative time-resolved phosphoproteomic analysis of mast cell signaling.</title>
        <authorList>
            <person name="Cao L."/>
            <person name="Yu K."/>
            <person name="Banh C."/>
            <person name="Nguyen V."/>
            <person name="Ritz A."/>
            <person name="Raphael B.J."/>
            <person name="Kawakami Y."/>
            <person name="Kawakami T."/>
            <person name="Salomon A.R."/>
        </authorList>
    </citation>
    <scope>PHOSPHORYLATION [LARGE SCALE ANALYSIS] AT TYR-771 AND TYR-775</scope>
    <scope>IDENTIFICATION BY MASS SPECTROMETRY [LARGE SCALE ANALYSIS]</scope>
    <source>
        <tissue>Mast cell</tissue>
    </source>
</reference>
<reference key="18">
    <citation type="journal article" date="2008" name="J. Proteome Res.">
        <title>Large-scale identification and evolution indexing of tyrosine phosphorylation sites from murine brain.</title>
        <authorList>
            <person name="Ballif B.A."/>
            <person name="Carey G.R."/>
            <person name="Sunyaev S.R."/>
            <person name="Gygi S.P."/>
        </authorList>
    </citation>
    <scope>PHOSPHORYLATION [LARGE SCALE ANALYSIS] AT TYR-506 AND TYR-977</scope>
    <scope>IDENTIFICATION BY MASS SPECTROMETRY [LARGE SCALE ANALYSIS]</scope>
    <source>
        <tissue>Brain</tissue>
    </source>
</reference>
<reference key="19">
    <citation type="journal article" date="2009" name="Nat. Immunol.">
        <title>Themis controls thymocyte selection through regulation of T cell antigen receptor-mediated signaling.</title>
        <authorList>
            <person name="Fu G."/>
            <person name="Vallee S."/>
            <person name="Rybakin V."/>
            <person name="McGuire M.V."/>
            <person name="Ampudia J."/>
            <person name="Brockmeyer C."/>
            <person name="Salek M."/>
            <person name="Fallen P.R."/>
            <person name="Hoerter J.A.H."/>
            <person name="Munshi A."/>
            <person name="Huang Y.H."/>
            <person name="Hu J."/>
            <person name="Fox H.S."/>
            <person name="Sauer K."/>
            <person name="Acuto O."/>
            <person name="Gascoigne N.R.J."/>
        </authorList>
    </citation>
    <scope>INTERACTION WITH THEMIS</scope>
</reference>
<reference key="20">
    <citation type="journal article" date="2010" name="Cell">
        <title>A tissue-specific atlas of mouse protein phosphorylation and expression.</title>
        <authorList>
            <person name="Huttlin E.L."/>
            <person name="Jedrychowski M.P."/>
            <person name="Elias J.E."/>
            <person name="Goswami T."/>
            <person name="Rad R."/>
            <person name="Beausoleil S.A."/>
            <person name="Villen J."/>
            <person name="Haas W."/>
            <person name="Sowa M.E."/>
            <person name="Gygi S.P."/>
        </authorList>
    </citation>
    <scope>IDENTIFICATION BY MASS SPECTROMETRY [LARGE SCALE ANALYSIS]</scope>
    <source>
        <tissue>Brain</tissue>
        <tissue>Brown adipose tissue</tissue>
        <tissue>Heart</tissue>
        <tissue>Kidney</tissue>
        <tissue>Liver</tissue>
        <tissue>Lung</tissue>
        <tissue>Pancreas</tissue>
        <tissue>Spleen</tissue>
        <tissue>Testis</tissue>
    </source>
</reference>
<reference key="21">
    <citation type="journal article" date="2012" name="Nat. Immunol.">
        <title>Tespa1 is involved in late thymocyte development through the regulation of TCR-mediated signaling.</title>
        <authorList>
            <person name="Wang D."/>
            <person name="Zheng M."/>
            <person name="Lei L."/>
            <person name="Ji J."/>
            <person name="Yao Y."/>
            <person name="Qiu Y."/>
            <person name="Ma L."/>
            <person name="Lou J."/>
            <person name="Ouyang C."/>
            <person name="Zhang X."/>
            <person name="He Y."/>
            <person name="Chi J."/>
            <person name="Wang L."/>
            <person name="Kuang Y."/>
            <person name="Wang J."/>
            <person name="Cao X."/>
            <person name="Lu L."/>
        </authorList>
    </citation>
    <scope>INTERACTION WITH GRB2; LAT AND THEMIS</scope>
    <source>
        <tissue>Thymocyte</tissue>
    </source>
</reference>
<reference key="22">
    <citation type="journal article" date="2011" name="J. Biol. Chem.">
        <title>Protein-tyrosine phosphatase DEP-1 controls receptor tyrosine kinase FLT3 signaling.</title>
        <authorList>
            <person name="Arora D."/>
            <person name="Stopp S."/>
            <person name="Bohmer S.A."/>
            <person name="Schons J."/>
            <person name="Godfrey R."/>
            <person name="Masson K."/>
            <person name="Razumovskaya E."/>
            <person name="Ronnstrand L."/>
            <person name="Tanzer S."/>
            <person name="Bauer R."/>
            <person name="Bohmer F.D."/>
            <person name="Muller J.P."/>
        </authorList>
    </citation>
    <scope>PHOSPHORYLATION IN RESPONSE TO FLT3 SIGNALING</scope>
</reference>
<sequence>MAGVATPCANGCGPGAPSEAEVLHLCRSLEVGTVMTLFYSKKSQRPERKTFQVKLETRQITWSRGADKIEGSIDIREIKEIRPGKTSRDFDRYQEDPAFRPDQSHCFVILYGMEFRLKTLSLQATSEDEVNMWIKGLTWLMEDTLQAATPLQIERWLRKQFYSVDRNREDRISAKDLKNMLSQVNYRVPNMRFLRERLTDLEQRSGDITYGQFAQLYRSLMYSAQKTMDLPFLETNALRTGERPEHCQVSLSEFQQFLLEYQGELWAVDRLQVQEFMLSFLRDPLREIEEPYFFLDELVTFLFSKENSVWNSQLDAVCPDTMNNPLSHYWISSSHNTYLTGDQFSSESSLEAYARCLRMGCRCIELDCWDGPDGMPVIYHGHTLTTKIKFSDVLHTIKEHAFVASEYPVILSIEDHCSIAQQRNMAQHFRKVLGDTLLTKPVDIAADGLPSPNQLRRKILIKHKKLAEGSAYEEVPTSVMYSENDISNSIKNGILYLEDPVNHEWYPHYFVLTSSKIYYSEETSSDQGNEDEEEPKEASSSTELHSSEKWFHGKLGAGRDGRHIAERLLTEYCIETGAPDGSFLVRESETFVGDYTLSFWRNGKVQHCRIHSRQDAGTPKFFLTDNLVFDSLYDLITHYQQVPLRCNEFEMRLSEPVPQTNAHESKEWYHASLTRAQAEHMLMRVPRDGAFLVRKRNEPNSYAISFRAEGKIKHCRVQQEGQTVMLGNSEFDSLVDLISYYEKHPLYRKMKLRYPINEEALEKIGTAEPDYGALYEGRNPGFYVEANPMPTFKCAVKALFDYKAQREDELTFTKSAIIQNVEKQDGGWWRGDYGGKKQLWFPSNYVEEMINPAVLEPEREHLDENSPLGDLLRGVLDVPACQIAIRPEGKNNRLFVFSISMPSVAQWSLDVAADSQEELQDWVKKIREVAQTADARLTEGKMMERRKKIALELSELVVYCRPVPFDEEKIGTERACYRDMSSFPETKAEKYVNKAKGKKFLQYNRLQLSRIYPKGQRLDSSNYDPLPMWICGSQLVALNFQTPDKPMQMNQALFMAGGHCGYVLQPSTMRDEAFDPFDKSSLRGLEPCVICIEVLGARHLPKNGRGIVCPFVEIEVAGAEYDSTKQKTEFVVDNGLNPVWPAKPFHFQISNPEFAFLRFVVYEEDMFSDQNFLAQATFPVKGLKTGYRAVPLKNNYSEDLELASLLIKIDIFPAKENGDLSPFSGISLRERASDASSQLFHVRAREGSFEARYQQPFEDFRISQEHLADHFDSRERSTSDGPSSATNLIEDPLHDKLWKCSL</sequence>
<feature type="initiator methionine" description="Removed" evidence="3">
    <location>
        <position position="1"/>
    </location>
</feature>
<feature type="chain" id="PRO_0000088499" description="1-phosphatidylinositol 4,5-bisphosphate phosphodiesterase gamma-1">
    <location>
        <begin position="2"/>
        <end position="1302"/>
    </location>
</feature>
<feature type="domain" description="PH 1" evidence="5">
    <location>
        <begin position="27"/>
        <end position="142"/>
    </location>
</feature>
<feature type="domain" description="EF-hand" evidence="10">
    <location>
        <begin position="152"/>
        <end position="187"/>
    </location>
</feature>
<feature type="domain" description="PI-PLC X-box" evidence="8">
    <location>
        <begin position="320"/>
        <end position="464"/>
    </location>
</feature>
<feature type="domain" description="PH 2; first part" evidence="5">
    <location>
        <begin position="489"/>
        <end position="523"/>
    </location>
</feature>
<feature type="domain" description="SH2 1" evidence="6">
    <location>
        <begin position="550"/>
        <end position="657"/>
    </location>
</feature>
<feature type="domain" description="SH2 2" evidence="6">
    <location>
        <begin position="668"/>
        <end position="756"/>
    </location>
</feature>
<feature type="domain" description="SH3" evidence="7">
    <location>
        <begin position="791"/>
        <end position="851"/>
    </location>
</feature>
<feature type="domain" description="PH 2; second part" evidence="5">
    <location>
        <begin position="895"/>
        <end position="931"/>
    </location>
</feature>
<feature type="domain" description="PI-PLC Y-box" evidence="9">
    <location>
        <begin position="953"/>
        <end position="1070"/>
    </location>
</feature>
<feature type="domain" description="C2" evidence="4">
    <location>
        <begin position="1071"/>
        <end position="1194"/>
    </location>
</feature>
<feature type="region of interest" description="Disordered" evidence="11">
    <location>
        <begin position="522"/>
        <end position="545"/>
    </location>
</feature>
<feature type="active site" evidence="8">
    <location>
        <position position="335"/>
    </location>
</feature>
<feature type="active site" evidence="8">
    <location>
        <position position="380"/>
    </location>
</feature>
<feature type="binding site" evidence="10">
    <location>
        <position position="165"/>
    </location>
    <ligand>
        <name>Ca(2+)</name>
        <dbReference type="ChEBI" id="CHEBI:29108"/>
    </ligand>
</feature>
<feature type="binding site" evidence="10">
    <location>
        <position position="167"/>
    </location>
    <ligand>
        <name>Ca(2+)</name>
        <dbReference type="ChEBI" id="CHEBI:29108"/>
    </ligand>
</feature>
<feature type="binding site" evidence="10">
    <location>
        <position position="169"/>
    </location>
    <ligand>
        <name>Ca(2+)</name>
        <dbReference type="ChEBI" id="CHEBI:29108"/>
    </ligand>
</feature>
<feature type="binding site" evidence="10">
    <location>
        <position position="171"/>
    </location>
    <ligand>
        <name>Ca(2+)</name>
        <dbReference type="ChEBI" id="CHEBI:29108"/>
    </ligand>
</feature>
<feature type="binding site" evidence="10">
    <location>
        <position position="176"/>
    </location>
    <ligand>
        <name>Ca(2+)</name>
        <dbReference type="ChEBI" id="CHEBI:29108"/>
    </ligand>
</feature>
<feature type="modified residue" description="N-acetylalanine" evidence="3">
    <location>
        <position position="2"/>
    </location>
</feature>
<feature type="modified residue" description="Phosphotyrosine" evidence="31">
    <location>
        <position position="506"/>
    </location>
</feature>
<feature type="modified residue" description="Phosphotyrosine; by SYK" evidence="29 30">
    <location>
        <position position="771"/>
    </location>
</feature>
<feature type="modified residue" description="Phosphotyrosine" evidence="30">
    <location>
        <position position="775"/>
    </location>
</feature>
<feature type="modified residue" description="Phosphotyrosine; by ITK, SYK and TXK" evidence="3">
    <location>
        <position position="783"/>
    </location>
</feature>
<feature type="modified residue" description="Phosphotyrosine" evidence="31">
    <location>
        <position position="977"/>
    </location>
</feature>
<feature type="modified residue" description="Phosphoserine" evidence="3">
    <location>
        <position position="1221"/>
    </location>
</feature>
<feature type="modified residue" description="Phosphoserine" evidence="3">
    <location>
        <position position="1227"/>
    </location>
</feature>
<feature type="modified residue" description="Phosphoserine" evidence="3">
    <location>
        <position position="1233"/>
    </location>
</feature>
<feature type="modified residue" description="Phosphoserine" evidence="3">
    <location>
        <position position="1248"/>
    </location>
</feature>
<feature type="modified residue" description="Phosphotyrosine" evidence="1">
    <location>
        <position position="1253"/>
    </location>
</feature>
<feature type="modified residue" description="Phosphoserine" evidence="3">
    <location>
        <position position="1263"/>
    </location>
</feature>
<feature type="sequence conflict" description="In Ref. 2; CAA64639." evidence="27" ref="2">
    <original>D</original>
    <variation>A</variation>
    <location>
        <position position="966"/>
    </location>
</feature>
<feature type="sequence conflict" description="In Ref. 2; CAA64639." evidence="27" ref="2">
    <original>P</original>
    <variation>R</variation>
    <location>
        <position position="984"/>
    </location>
</feature>
<accession>Q62077</accession>
<accession>Q6P1G1</accession>
<name>PLCG1_MOUSE</name>
<dbReference type="EC" id="3.1.4.11" evidence="2"/>
<dbReference type="EMBL" id="BC065091">
    <property type="protein sequence ID" value="AAH65091.1"/>
    <property type="molecule type" value="mRNA"/>
</dbReference>
<dbReference type="EMBL" id="X95346">
    <property type="protein sequence ID" value="CAA64639.1"/>
    <property type="molecule type" value="mRNA"/>
</dbReference>
<dbReference type="CCDS" id="CCDS16996.1"/>
<dbReference type="RefSeq" id="NP_067255.2">
    <property type="nucleotide sequence ID" value="NM_021280.3"/>
</dbReference>
<dbReference type="SMR" id="Q62077"/>
<dbReference type="BioGRID" id="202238">
    <property type="interactions" value="42"/>
</dbReference>
<dbReference type="CORUM" id="Q62077"/>
<dbReference type="DIP" id="DIP-29284N"/>
<dbReference type="FunCoup" id="Q62077">
    <property type="interactions" value="3013"/>
</dbReference>
<dbReference type="IntAct" id="Q62077">
    <property type="interactions" value="22"/>
</dbReference>
<dbReference type="MINT" id="Q62077"/>
<dbReference type="STRING" id="10090.ENSMUSP00000099404"/>
<dbReference type="GlyGen" id="Q62077">
    <property type="glycosylation" value="1 site, 1 O-linked glycan (1 site)"/>
</dbReference>
<dbReference type="iPTMnet" id="Q62077"/>
<dbReference type="PhosphoSitePlus" id="Q62077"/>
<dbReference type="SwissPalm" id="Q62077"/>
<dbReference type="jPOST" id="Q62077"/>
<dbReference type="PaxDb" id="10090-ENSMUSP00000099404"/>
<dbReference type="ProteomicsDB" id="289615"/>
<dbReference type="Pumba" id="Q62077"/>
<dbReference type="ABCD" id="Q62077">
    <property type="antibodies" value="1 sequenced antibody"/>
</dbReference>
<dbReference type="Antibodypedia" id="3796">
    <property type="antibodies" value="1165 antibodies from 43 providers"/>
</dbReference>
<dbReference type="DNASU" id="18803"/>
<dbReference type="Ensembl" id="ENSMUST00000103115.8">
    <property type="protein sequence ID" value="ENSMUSP00000099404.2"/>
    <property type="gene ID" value="ENSMUSG00000016933.18"/>
</dbReference>
<dbReference type="GeneID" id="18803"/>
<dbReference type="KEGG" id="mmu:18803"/>
<dbReference type="UCSC" id="uc008nra.1">
    <property type="organism name" value="mouse"/>
</dbReference>
<dbReference type="AGR" id="MGI:97615"/>
<dbReference type="CTD" id="5335"/>
<dbReference type="MGI" id="MGI:97615">
    <property type="gene designation" value="Plcg1"/>
</dbReference>
<dbReference type="VEuPathDB" id="HostDB:ENSMUSG00000016933"/>
<dbReference type="eggNOG" id="KOG1264">
    <property type="taxonomic scope" value="Eukaryota"/>
</dbReference>
<dbReference type="GeneTree" id="ENSGT00940000158901"/>
<dbReference type="InParanoid" id="Q62077"/>
<dbReference type="OMA" id="CMLERGT"/>
<dbReference type="OrthoDB" id="269822at2759"/>
<dbReference type="PhylomeDB" id="Q62077"/>
<dbReference type="TreeFam" id="TF313216"/>
<dbReference type="BRENDA" id="3.1.4.11">
    <property type="organism ID" value="3474"/>
</dbReference>
<dbReference type="Reactome" id="R-MMU-1169408">
    <property type="pathway name" value="ISG15 antiviral mechanism"/>
</dbReference>
<dbReference type="Reactome" id="R-MMU-1855204">
    <property type="pathway name" value="Synthesis of IP3 and IP4 in the cytosol"/>
</dbReference>
<dbReference type="Reactome" id="R-MMU-186763">
    <property type="pathway name" value="Downstream signal transduction"/>
</dbReference>
<dbReference type="Reactome" id="R-MMU-201556">
    <property type="pathway name" value="Signaling by ALK"/>
</dbReference>
<dbReference type="Reactome" id="R-MMU-202433">
    <property type="pathway name" value="Generation of second messenger molecules"/>
</dbReference>
<dbReference type="Reactome" id="R-MMU-2029485">
    <property type="pathway name" value="Role of phospholipids in phagocytosis"/>
</dbReference>
<dbReference type="Reactome" id="R-MMU-210990">
    <property type="pathway name" value="PECAM1 interactions"/>
</dbReference>
<dbReference type="Reactome" id="R-MMU-212718">
    <property type="pathway name" value="EGFR interacts with phospholipase C-gamma"/>
</dbReference>
<dbReference type="Reactome" id="R-MMU-2424491">
    <property type="pathway name" value="DAP12 signaling"/>
</dbReference>
<dbReference type="Reactome" id="R-MMU-2871796">
    <property type="pathway name" value="FCERI mediated MAPK activation"/>
</dbReference>
<dbReference type="Reactome" id="R-MMU-2871809">
    <property type="pathway name" value="FCERI mediated Ca+2 mobilization"/>
</dbReference>
<dbReference type="Reactome" id="R-MMU-5218921">
    <property type="pathway name" value="VEGFR2 mediated cell proliferation"/>
</dbReference>
<dbReference type="Reactome" id="R-MMU-5654219">
    <property type="pathway name" value="Phospholipase C-mediated cascade: FGFR1"/>
</dbReference>
<dbReference type="Reactome" id="R-MMU-5654221">
    <property type="pathway name" value="Phospholipase C-mediated cascade, FGFR2"/>
</dbReference>
<dbReference type="Reactome" id="R-MMU-5654227">
    <property type="pathway name" value="Phospholipase C-mediated cascade, FGFR3"/>
</dbReference>
<dbReference type="Reactome" id="R-MMU-5654228">
    <property type="pathway name" value="Phospholipase C-mediated cascade, FGFR4"/>
</dbReference>
<dbReference type="Reactome" id="R-MMU-8853659">
    <property type="pathway name" value="RET signaling"/>
</dbReference>
<dbReference type="Reactome" id="R-MMU-9026527">
    <property type="pathway name" value="Activated NTRK2 signals through PLCG1"/>
</dbReference>
<dbReference type="Reactome" id="R-MMU-9034793">
    <property type="pathway name" value="Activated NTRK3 signals through PLCG1"/>
</dbReference>
<dbReference type="BioGRID-ORCS" id="18803">
    <property type="hits" value="2 hits in 65 CRISPR screens"/>
</dbReference>
<dbReference type="ChiTaRS" id="Plcg1">
    <property type="organism name" value="mouse"/>
</dbReference>
<dbReference type="PRO" id="PR:Q62077"/>
<dbReference type="Proteomes" id="UP000000589">
    <property type="component" value="Chromosome 2"/>
</dbReference>
<dbReference type="RNAct" id="Q62077">
    <property type="molecule type" value="protein"/>
</dbReference>
<dbReference type="Bgee" id="ENSMUSG00000016933">
    <property type="expression patterns" value="Expressed in floor plate of midbrain and 227 other cell types or tissues"/>
</dbReference>
<dbReference type="ExpressionAtlas" id="Q62077">
    <property type="expression patterns" value="baseline and differential"/>
</dbReference>
<dbReference type="GO" id="GO:0005911">
    <property type="term" value="C:cell-cell junction"/>
    <property type="evidence" value="ECO:0000314"/>
    <property type="project" value="MGI"/>
</dbReference>
<dbReference type="GO" id="GO:0005737">
    <property type="term" value="C:cytoplasm"/>
    <property type="evidence" value="ECO:0000266"/>
    <property type="project" value="MGI"/>
</dbReference>
<dbReference type="GO" id="GO:0005829">
    <property type="term" value="C:cytosol"/>
    <property type="evidence" value="ECO:0000304"/>
    <property type="project" value="Reactome"/>
</dbReference>
<dbReference type="GO" id="GO:0098978">
    <property type="term" value="C:glutamatergic synapse"/>
    <property type="evidence" value="ECO:0000314"/>
    <property type="project" value="SynGO"/>
</dbReference>
<dbReference type="GO" id="GO:0030027">
    <property type="term" value="C:lamellipodium"/>
    <property type="evidence" value="ECO:0000250"/>
    <property type="project" value="UniProtKB"/>
</dbReference>
<dbReference type="GO" id="GO:0005886">
    <property type="term" value="C:plasma membrane"/>
    <property type="evidence" value="ECO:0000266"/>
    <property type="project" value="MGI"/>
</dbReference>
<dbReference type="GO" id="GO:0001726">
    <property type="term" value="C:ruffle"/>
    <property type="evidence" value="ECO:0000250"/>
    <property type="project" value="UniProtKB"/>
</dbReference>
<dbReference type="GO" id="GO:0098685">
    <property type="term" value="C:Schaffer collateral - CA1 synapse"/>
    <property type="evidence" value="ECO:0000314"/>
    <property type="project" value="SynGO"/>
</dbReference>
<dbReference type="GO" id="GO:0005509">
    <property type="term" value="F:calcium ion binding"/>
    <property type="evidence" value="ECO:0007669"/>
    <property type="project" value="InterPro"/>
</dbReference>
<dbReference type="GO" id="GO:0050429">
    <property type="term" value="F:calcium-dependent phospholipase C activity"/>
    <property type="evidence" value="ECO:0000250"/>
    <property type="project" value="UniProtKB"/>
</dbReference>
<dbReference type="GO" id="GO:0035254">
    <property type="term" value="F:glutamate receptor binding"/>
    <property type="evidence" value="ECO:0000353"/>
    <property type="project" value="MGI"/>
</dbReference>
<dbReference type="GO" id="GO:0005085">
    <property type="term" value="F:guanyl-nucleotide exchange factor activity"/>
    <property type="evidence" value="ECO:0000250"/>
    <property type="project" value="UniProtKB"/>
</dbReference>
<dbReference type="GO" id="GO:0004435">
    <property type="term" value="F:phosphatidylinositol-4,5-bisphosphate phospholipase C activity"/>
    <property type="evidence" value="ECO:0000269"/>
    <property type="project" value="Reactome"/>
</dbReference>
<dbReference type="GO" id="GO:0004629">
    <property type="term" value="F:phospholipase C activity"/>
    <property type="evidence" value="ECO:0000315"/>
    <property type="project" value="MGI"/>
</dbReference>
<dbReference type="GO" id="GO:0030971">
    <property type="term" value="F:receptor tyrosine kinase binding"/>
    <property type="evidence" value="ECO:0000353"/>
    <property type="project" value="UniProtKB"/>
</dbReference>
<dbReference type="GO" id="GO:0071364">
    <property type="term" value="P:cellular response to epidermal growth factor stimulus"/>
    <property type="evidence" value="ECO:0000250"/>
    <property type="project" value="UniProtKB"/>
</dbReference>
<dbReference type="GO" id="GO:0007173">
    <property type="term" value="P:epidermal growth factor receptor signaling pathway"/>
    <property type="evidence" value="ECO:0000250"/>
    <property type="project" value="UniProtKB"/>
</dbReference>
<dbReference type="GO" id="GO:0001701">
    <property type="term" value="P:in utero embryonic development"/>
    <property type="evidence" value="ECO:0000315"/>
    <property type="project" value="MGI"/>
</dbReference>
<dbReference type="GO" id="GO:0035556">
    <property type="term" value="P:intracellular signal transduction"/>
    <property type="evidence" value="ECO:0007669"/>
    <property type="project" value="InterPro"/>
</dbReference>
<dbReference type="GO" id="GO:0050804">
    <property type="term" value="P:modulation of chemical synaptic transmission"/>
    <property type="evidence" value="ECO:0000314"/>
    <property type="project" value="SynGO"/>
</dbReference>
<dbReference type="GO" id="GO:0046488">
    <property type="term" value="P:phosphatidylinositol metabolic process"/>
    <property type="evidence" value="ECO:0000250"/>
    <property type="project" value="UniProtKB"/>
</dbReference>
<dbReference type="GO" id="GO:0009395">
    <property type="term" value="P:phospholipid catabolic process"/>
    <property type="evidence" value="ECO:0007669"/>
    <property type="project" value="InterPro"/>
</dbReference>
<dbReference type="GO" id="GO:0010634">
    <property type="term" value="P:positive regulation of epithelial cell migration"/>
    <property type="evidence" value="ECO:0000250"/>
    <property type="project" value="UniProtKB"/>
</dbReference>
<dbReference type="GO" id="GO:0050852">
    <property type="term" value="P:T cell receptor signaling pathway"/>
    <property type="evidence" value="ECO:0000314"/>
    <property type="project" value="MGI"/>
</dbReference>
<dbReference type="CDD" id="cd00275">
    <property type="entry name" value="C2_PLC_like"/>
    <property type="match status" value="1"/>
</dbReference>
<dbReference type="CDD" id="cd13362">
    <property type="entry name" value="PH_PLC_gamma"/>
    <property type="match status" value="1"/>
</dbReference>
<dbReference type="CDD" id="cd13234">
    <property type="entry name" value="PHsplit_PLC_gamma"/>
    <property type="match status" value="1"/>
</dbReference>
<dbReference type="CDD" id="cd08592">
    <property type="entry name" value="PI-PLCc_gamma"/>
    <property type="match status" value="1"/>
</dbReference>
<dbReference type="CDD" id="cd09932">
    <property type="entry name" value="SH2_C-SH2_PLC_gamma_like"/>
    <property type="match status" value="1"/>
</dbReference>
<dbReference type="CDD" id="cd10341">
    <property type="entry name" value="SH2_N-SH2_PLC_gamma_like"/>
    <property type="match status" value="1"/>
</dbReference>
<dbReference type="CDD" id="cd11970">
    <property type="entry name" value="SH3_PLCgamma1"/>
    <property type="match status" value="1"/>
</dbReference>
<dbReference type="FunFam" id="2.30.29.30:FF:000155">
    <property type="entry name" value="1-phosphatidylinositol 4,5-bisphosphate phosphodiesterase gamma"/>
    <property type="match status" value="1"/>
</dbReference>
<dbReference type="FunFam" id="2.30.30.40:FF:000051">
    <property type="entry name" value="1-phosphatidylinositol 4,5-bisphosphate phosphodiesterase gamma"/>
    <property type="match status" value="1"/>
</dbReference>
<dbReference type="FunFam" id="2.60.40.150:FF:000067">
    <property type="entry name" value="1-phosphatidylinositol 4,5-bisphosphate phosphodiesterase gamma"/>
    <property type="match status" value="1"/>
</dbReference>
<dbReference type="FunFam" id="3.20.20.190:FF:000004">
    <property type="entry name" value="1-phosphatidylinositol 4,5-bisphosphate phosphodiesterase gamma"/>
    <property type="match status" value="1"/>
</dbReference>
<dbReference type="FunFam" id="3.20.20.190:FF:000007">
    <property type="entry name" value="1-phosphatidylinositol 4,5-bisphosphate phosphodiesterase gamma"/>
    <property type="match status" value="1"/>
</dbReference>
<dbReference type="FunFam" id="3.30.505.10:FF:000009">
    <property type="entry name" value="1-phosphatidylinositol 4,5-bisphosphate phosphodiesterase gamma"/>
    <property type="match status" value="1"/>
</dbReference>
<dbReference type="FunFam" id="3.30.505.10:FF:000011">
    <property type="entry name" value="1-phosphatidylinositol 4,5-bisphosphate phosphodiesterase gamma"/>
    <property type="match status" value="1"/>
</dbReference>
<dbReference type="Gene3D" id="2.60.40.150">
    <property type="entry name" value="C2 domain"/>
    <property type="match status" value="1"/>
</dbReference>
<dbReference type="Gene3D" id="3.20.20.190">
    <property type="entry name" value="Phosphatidylinositol (PI) phosphodiesterase"/>
    <property type="match status" value="2"/>
</dbReference>
<dbReference type="Gene3D" id="2.30.29.30">
    <property type="entry name" value="Pleckstrin-homology domain (PH domain)/Phosphotyrosine-binding domain (PTB)"/>
    <property type="match status" value="1"/>
</dbReference>
<dbReference type="Gene3D" id="3.30.505.10">
    <property type="entry name" value="SH2 domain"/>
    <property type="match status" value="2"/>
</dbReference>
<dbReference type="Gene3D" id="2.30.30.40">
    <property type="entry name" value="SH3 Domains"/>
    <property type="match status" value="1"/>
</dbReference>
<dbReference type="InterPro" id="IPR000008">
    <property type="entry name" value="C2_dom"/>
</dbReference>
<dbReference type="InterPro" id="IPR035892">
    <property type="entry name" value="C2_domain_sf"/>
</dbReference>
<dbReference type="InterPro" id="IPR011992">
    <property type="entry name" value="EF-hand-dom_pair"/>
</dbReference>
<dbReference type="InterPro" id="IPR018247">
    <property type="entry name" value="EF_Hand_1_Ca_BS"/>
</dbReference>
<dbReference type="InterPro" id="IPR002048">
    <property type="entry name" value="EF_hand_dom"/>
</dbReference>
<dbReference type="InterPro" id="IPR011993">
    <property type="entry name" value="PH-like_dom_sf"/>
</dbReference>
<dbReference type="InterPro" id="IPR001849">
    <property type="entry name" value="PH_domain"/>
</dbReference>
<dbReference type="InterPro" id="IPR001192">
    <property type="entry name" value="PI-PLC_fam"/>
</dbReference>
<dbReference type="InterPro" id="IPR016279">
    <property type="entry name" value="PLC-gamma"/>
</dbReference>
<dbReference type="InterPro" id="IPR035023">
    <property type="entry name" value="PLC-gamma_C-SH2"/>
</dbReference>
<dbReference type="InterPro" id="IPR035024">
    <property type="entry name" value="PLC-gamma_N-SH2"/>
</dbReference>
<dbReference type="InterPro" id="IPR017946">
    <property type="entry name" value="PLC-like_Pdiesterase_TIM-brl"/>
</dbReference>
<dbReference type="InterPro" id="IPR057061">
    <property type="entry name" value="PLCG_EF-hand_2"/>
</dbReference>
<dbReference type="InterPro" id="IPR035724">
    <property type="entry name" value="PLCgamma1_SH3"/>
</dbReference>
<dbReference type="InterPro" id="IPR000909">
    <property type="entry name" value="PLipase_C_PInositol-sp_X_dom"/>
</dbReference>
<dbReference type="InterPro" id="IPR001711">
    <property type="entry name" value="PLipase_C_Pinositol-sp_Y"/>
</dbReference>
<dbReference type="InterPro" id="IPR000980">
    <property type="entry name" value="SH2"/>
</dbReference>
<dbReference type="InterPro" id="IPR036860">
    <property type="entry name" value="SH2_dom_sf"/>
</dbReference>
<dbReference type="InterPro" id="IPR036028">
    <property type="entry name" value="SH3-like_dom_sf"/>
</dbReference>
<dbReference type="InterPro" id="IPR001452">
    <property type="entry name" value="SH3_domain"/>
</dbReference>
<dbReference type="PANTHER" id="PTHR10336:SF173">
    <property type="entry name" value="1-PHOSPHATIDYLINOSITOL 4,5-BISPHOSPHATE PHOSPHODIESTERASE GAMMA-1"/>
    <property type="match status" value="1"/>
</dbReference>
<dbReference type="PANTHER" id="PTHR10336">
    <property type="entry name" value="PHOSPHOINOSITIDE-SPECIFIC PHOSPHOLIPASE C FAMILY PROTEIN"/>
    <property type="match status" value="1"/>
</dbReference>
<dbReference type="Pfam" id="PF00168">
    <property type="entry name" value="C2"/>
    <property type="match status" value="1"/>
</dbReference>
<dbReference type="Pfam" id="PF23329">
    <property type="entry name" value="EF_HAND_1_PLCG"/>
    <property type="match status" value="1"/>
</dbReference>
<dbReference type="Pfam" id="PF23583">
    <property type="entry name" value="EF_HAND_2_PLCG"/>
    <property type="match status" value="1"/>
</dbReference>
<dbReference type="Pfam" id="PF00169">
    <property type="entry name" value="PH"/>
    <property type="match status" value="1"/>
</dbReference>
<dbReference type="Pfam" id="PF00388">
    <property type="entry name" value="PI-PLC-X"/>
    <property type="match status" value="1"/>
</dbReference>
<dbReference type="Pfam" id="PF00387">
    <property type="entry name" value="PI-PLC-Y"/>
    <property type="match status" value="1"/>
</dbReference>
<dbReference type="Pfam" id="PF00017">
    <property type="entry name" value="SH2"/>
    <property type="match status" value="2"/>
</dbReference>
<dbReference type="Pfam" id="PF00018">
    <property type="entry name" value="SH3_1"/>
    <property type="match status" value="1"/>
</dbReference>
<dbReference type="PIRSF" id="PIRSF000952">
    <property type="entry name" value="PLC-gamma"/>
    <property type="match status" value="1"/>
</dbReference>
<dbReference type="PRINTS" id="PR00390">
    <property type="entry name" value="PHPHLIPASEC"/>
</dbReference>
<dbReference type="PRINTS" id="PR00401">
    <property type="entry name" value="SH2DOMAIN"/>
</dbReference>
<dbReference type="PRINTS" id="PR00452">
    <property type="entry name" value="SH3DOMAIN"/>
</dbReference>
<dbReference type="SMART" id="SM00239">
    <property type="entry name" value="C2"/>
    <property type="match status" value="1"/>
</dbReference>
<dbReference type="SMART" id="SM00233">
    <property type="entry name" value="PH"/>
    <property type="match status" value="3"/>
</dbReference>
<dbReference type="SMART" id="SM00148">
    <property type="entry name" value="PLCXc"/>
    <property type="match status" value="1"/>
</dbReference>
<dbReference type="SMART" id="SM00149">
    <property type="entry name" value="PLCYc"/>
    <property type="match status" value="1"/>
</dbReference>
<dbReference type="SMART" id="SM00252">
    <property type="entry name" value="SH2"/>
    <property type="match status" value="2"/>
</dbReference>
<dbReference type="SMART" id="SM00326">
    <property type="entry name" value="SH3"/>
    <property type="match status" value="1"/>
</dbReference>
<dbReference type="SUPFAM" id="SSF49562">
    <property type="entry name" value="C2 domain (Calcium/lipid-binding domain, CaLB)"/>
    <property type="match status" value="1"/>
</dbReference>
<dbReference type="SUPFAM" id="SSF47473">
    <property type="entry name" value="EF-hand"/>
    <property type="match status" value="1"/>
</dbReference>
<dbReference type="SUPFAM" id="SSF50729">
    <property type="entry name" value="PH domain-like"/>
    <property type="match status" value="1"/>
</dbReference>
<dbReference type="SUPFAM" id="SSF51695">
    <property type="entry name" value="PLC-like phosphodiesterases"/>
    <property type="match status" value="1"/>
</dbReference>
<dbReference type="SUPFAM" id="SSF55550">
    <property type="entry name" value="SH2 domain"/>
    <property type="match status" value="2"/>
</dbReference>
<dbReference type="SUPFAM" id="SSF50044">
    <property type="entry name" value="SH3-domain"/>
    <property type="match status" value="1"/>
</dbReference>
<dbReference type="PROSITE" id="PS50004">
    <property type="entry name" value="C2"/>
    <property type="match status" value="1"/>
</dbReference>
<dbReference type="PROSITE" id="PS00018">
    <property type="entry name" value="EF_HAND_1"/>
    <property type="match status" value="1"/>
</dbReference>
<dbReference type="PROSITE" id="PS50222">
    <property type="entry name" value="EF_HAND_2"/>
    <property type="match status" value="1"/>
</dbReference>
<dbReference type="PROSITE" id="PS50003">
    <property type="entry name" value="PH_DOMAIN"/>
    <property type="match status" value="2"/>
</dbReference>
<dbReference type="PROSITE" id="PS50007">
    <property type="entry name" value="PIPLC_X_DOMAIN"/>
    <property type="match status" value="1"/>
</dbReference>
<dbReference type="PROSITE" id="PS50008">
    <property type="entry name" value="PIPLC_Y_DOMAIN"/>
    <property type="match status" value="1"/>
</dbReference>
<dbReference type="PROSITE" id="PS50001">
    <property type="entry name" value="SH2"/>
    <property type="match status" value="2"/>
</dbReference>
<dbReference type="PROSITE" id="PS50002">
    <property type="entry name" value="SH3"/>
    <property type="match status" value="1"/>
</dbReference>
<organism>
    <name type="scientific">Mus musculus</name>
    <name type="common">Mouse</name>
    <dbReference type="NCBI Taxonomy" id="10090"/>
    <lineage>
        <taxon>Eukaryota</taxon>
        <taxon>Metazoa</taxon>
        <taxon>Chordata</taxon>
        <taxon>Craniata</taxon>
        <taxon>Vertebrata</taxon>
        <taxon>Euteleostomi</taxon>
        <taxon>Mammalia</taxon>
        <taxon>Eutheria</taxon>
        <taxon>Euarchontoglires</taxon>
        <taxon>Glires</taxon>
        <taxon>Rodentia</taxon>
        <taxon>Myomorpha</taxon>
        <taxon>Muroidea</taxon>
        <taxon>Muridae</taxon>
        <taxon>Murinae</taxon>
        <taxon>Mus</taxon>
        <taxon>Mus</taxon>
    </lineage>
</organism>
<protein>
    <recommendedName>
        <fullName evidence="27">1-phosphatidylinositol 4,5-bisphosphate phosphodiesterase gamma-1</fullName>
        <ecNumber evidence="2">3.1.4.11</ecNumber>
    </recommendedName>
    <alternativeName>
        <fullName>Phosphoinositide phospholipase C-gamma-1</fullName>
    </alternativeName>
    <alternativeName>
        <fullName>Phospholipase C-gamma-1</fullName>
        <shortName>PLC-gamma-1</shortName>
    </alternativeName>
</protein>
<proteinExistence type="evidence at protein level"/>